<proteinExistence type="inferred from homology"/>
<reference key="1">
    <citation type="journal article" date="1998" name="Nature">
        <title>Analysis of 1.9 Mb of contiguous sequence from chromosome 4 of Arabidopsis thaliana.</title>
        <authorList>
            <person name="Bevan M."/>
            <person name="Bancroft I."/>
            <person name="Bent E."/>
            <person name="Love K."/>
            <person name="Goodman H.M."/>
            <person name="Dean C."/>
            <person name="Bergkamp R."/>
            <person name="Dirkse W."/>
            <person name="van Staveren M."/>
            <person name="Stiekema W."/>
            <person name="Drost L."/>
            <person name="Ridley P."/>
            <person name="Hudson S.-A."/>
            <person name="Patel K."/>
            <person name="Murphy G."/>
            <person name="Piffanelli P."/>
            <person name="Wedler H."/>
            <person name="Wedler E."/>
            <person name="Wambutt R."/>
            <person name="Weitzenegger T."/>
            <person name="Pohl T."/>
            <person name="Terryn N."/>
            <person name="Gielen J."/>
            <person name="Villarroel R."/>
            <person name="De Clercq R."/>
            <person name="van Montagu M."/>
            <person name="Lecharny A."/>
            <person name="Aubourg S."/>
            <person name="Gy I."/>
            <person name="Kreis M."/>
            <person name="Lao N."/>
            <person name="Kavanagh T."/>
            <person name="Hempel S."/>
            <person name="Kotter P."/>
            <person name="Entian K.-D."/>
            <person name="Rieger M."/>
            <person name="Schaefer M."/>
            <person name="Funk B."/>
            <person name="Mueller-Auer S."/>
            <person name="Silvey M."/>
            <person name="James R."/>
            <person name="Monfort A."/>
            <person name="Pons A."/>
            <person name="Puigdomenech P."/>
            <person name="Douka A."/>
            <person name="Voukelatou E."/>
            <person name="Milioni D."/>
            <person name="Hatzopoulos P."/>
            <person name="Piravandi E."/>
            <person name="Obermaier B."/>
            <person name="Hilbert H."/>
            <person name="Duesterhoeft A."/>
            <person name="Moores T."/>
            <person name="Jones J.D.G."/>
            <person name="Eneva T."/>
            <person name="Palme K."/>
            <person name="Benes V."/>
            <person name="Rechmann S."/>
            <person name="Ansorge W."/>
            <person name="Cooke R."/>
            <person name="Berger C."/>
            <person name="Delseny M."/>
            <person name="Voet M."/>
            <person name="Volckaert G."/>
            <person name="Mewes H.-W."/>
            <person name="Klosterman S."/>
            <person name="Schueller C."/>
            <person name="Chalwatzis N."/>
        </authorList>
    </citation>
    <scope>NUCLEOTIDE SEQUENCE [LARGE SCALE GENOMIC DNA]</scope>
    <source>
        <strain>cv. Columbia</strain>
    </source>
</reference>
<reference evidence="3" key="2">
    <citation type="journal article" date="1999" name="Nature">
        <title>Sequence and analysis of chromosome 4 of the plant Arabidopsis thaliana.</title>
        <authorList>
            <person name="Mayer K.F.X."/>
            <person name="Schueller C."/>
            <person name="Wambutt R."/>
            <person name="Murphy G."/>
            <person name="Volckaert G."/>
            <person name="Pohl T."/>
            <person name="Duesterhoeft A."/>
            <person name="Stiekema W."/>
            <person name="Entian K.-D."/>
            <person name="Terryn N."/>
            <person name="Harris B."/>
            <person name="Ansorge W."/>
            <person name="Brandt P."/>
            <person name="Grivell L.A."/>
            <person name="Rieger M."/>
            <person name="Weichselgartner M."/>
            <person name="de Simone V."/>
            <person name="Obermaier B."/>
            <person name="Mache R."/>
            <person name="Mueller M."/>
            <person name="Kreis M."/>
            <person name="Delseny M."/>
            <person name="Puigdomenech P."/>
            <person name="Watson M."/>
            <person name="Schmidtheini T."/>
            <person name="Reichert B."/>
            <person name="Portetelle D."/>
            <person name="Perez-Alonso M."/>
            <person name="Boutry M."/>
            <person name="Bancroft I."/>
            <person name="Vos P."/>
            <person name="Hoheisel J."/>
            <person name="Zimmermann W."/>
            <person name="Wedler H."/>
            <person name="Ridley P."/>
            <person name="Langham S.-A."/>
            <person name="McCullagh B."/>
            <person name="Bilham L."/>
            <person name="Robben J."/>
            <person name="van der Schueren J."/>
            <person name="Grymonprez B."/>
            <person name="Chuang Y.-J."/>
            <person name="Vandenbussche F."/>
            <person name="Braeken M."/>
            <person name="Weltjens I."/>
            <person name="Voet M."/>
            <person name="Bastiaens I."/>
            <person name="Aert R."/>
            <person name="Defoor E."/>
            <person name="Weitzenegger T."/>
            <person name="Bothe G."/>
            <person name="Ramsperger U."/>
            <person name="Hilbert H."/>
            <person name="Braun M."/>
            <person name="Holzer E."/>
            <person name="Brandt A."/>
            <person name="Peters S."/>
            <person name="van Staveren M."/>
            <person name="Dirkse W."/>
            <person name="Mooijman P."/>
            <person name="Klein Lankhorst R."/>
            <person name="Rose M."/>
            <person name="Hauf J."/>
            <person name="Koetter P."/>
            <person name="Berneiser S."/>
            <person name="Hempel S."/>
            <person name="Feldpausch M."/>
            <person name="Lamberth S."/>
            <person name="Van den Daele H."/>
            <person name="De Keyser A."/>
            <person name="Buysshaert C."/>
            <person name="Gielen J."/>
            <person name="Villarroel R."/>
            <person name="De Clercq R."/>
            <person name="van Montagu M."/>
            <person name="Rogers J."/>
            <person name="Cronin A."/>
            <person name="Quail M.A."/>
            <person name="Bray-Allen S."/>
            <person name="Clark L."/>
            <person name="Doggett J."/>
            <person name="Hall S."/>
            <person name="Kay M."/>
            <person name="Lennard N."/>
            <person name="McLay K."/>
            <person name="Mayes R."/>
            <person name="Pettett A."/>
            <person name="Rajandream M.A."/>
            <person name="Lyne M."/>
            <person name="Benes V."/>
            <person name="Rechmann S."/>
            <person name="Borkova D."/>
            <person name="Bloecker H."/>
            <person name="Scharfe M."/>
            <person name="Grimm M."/>
            <person name="Loehnert T.-H."/>
            <person name="Dose S."/>
            <person name="de Haan M."/>
            <person name="Maarse A.C."/>
            <person name="Schaefer M."/>
            <person name="Mueller-Auer S."/>
            <person name="Gabel C."/>
            <person name="Fuchs M."/>
            <person name="Fartmann B."/>
            <person name="Granderath K."/>
            <person name="Dauner D."/>
            <person name="Herzl A."/>
            <person name="Neumann S."/>
            <person name="Argiriou A."/>
            <person name="Vitale D."/>
            <person name="Liguori R."/>
            <person name="Piravandi E."/>
            <person name="Massenet O."/>
            <person name="Quigley F."/>
            <person name="Clabauld G."/>
            <person name="Muendlein A."/>
            <person name="Felber R."/>
            <person name="Schnabl S."/>
            <person name="Hiller R."/>
            <person name="Schmidt W."/>
            <person name="Lecharny A."/>
            <person name="Aubourg S."/>
            <person name="Chefdor F."/>
            <person name="Cooke R."/>
            <person name="Berger C."/>
            <person name="Monfort A."/>
            <person name="Casacuberta E."/>
            <person name="Gibbons T."/>
            <person name="Weber N."/>
            <person name="Vandenbol M."/>
            <person name="Bargues M."/>
            <person name="Terol J."/>
            <person name="Torres A."/>
            <person name="Perez-Perez A."/>
            <person name="Purnelle B."/>
            <person name="Bent E."/>
            <person name="Johnson S."/>
            <person name="Tacon D."/>
            <person name="Jesse T."/>
            <person name="Heijnen L."/>
            <person name="Schwarz S."/>
            <person name="Scholler P."/>
            <person name="Heber S."/>
            <person name="Francs P."/>
            <person name="Bielke C."/>
            <person name="Frishman D."/>
            <person name="Haase D."/>
            <person name="Lemcke K."/>
            <person name="Mewes H.-W."/>
            <person name="Stocker S."/>
            <person name="Zaccaria P."/>
            <person name="Bevan M."/>
            <person name="Wilson R.K."/>
            <person name="de la Bastide M."/>
            <person name="Habermann K."/>
            <person name="Parnell L."/>
            <person name="Dedhia N."/>
            <person name="Gnoj L."/>
            <person name="Schutz K."/>
            <person name="Huang E."/>
            <person name="Spiegel L."/>
            <person name="Sekhon M."/>
            <person name="Murray J."/>
            <person name="Sheet P."/>
            <person name="Cordes M."/>
            <person name="Abu-Threideh J."/>
            <person name="Stoneking T."/>
            <person name="Kalicki J."/>
            <person name="Graves T."/>
            <person name="Harmon G."/>
            <person name="Edwards J."/>
            <person name="Latreille P."/>
            <person name="Courtney L."/>
            <person name="Cloud J."/>
            <person name="Abbott A."/>
            <person name="Scott K."/>
            <person name="Johnson D."/>
            <person name="Minx P."/>
            <person name="Bentley D."/>
            <person name="Fulton B."/>
            <person name="Miller N."/>
            <person name="Greco T."/>
            <person name="Kemp K."/>
            <person name="Kramer J."/>
            <person name="Fulton L."/>
            <person name="Mardis E."/>
            <person name="Dante M."/>
            <person name="Pepin K."/>
            <person name="Hillier L.W."/>
            <person name="Nelson J."/>
            <person name="Spieth J."/>
            <person name="Ryan E."/>
            <person name="Andrews S."/>
            <person name="Geisel C."/>
            <person name="Layman D."/>
            <person name="Du H."/>
            <person name="Ali J."/>
            <person name="Berghoff A."/>
            <person name="Jones K."/>
            <person name="Drone K."/>
            <person name="Cotton M."/>
            <person name="Joshu C."/>
            <person name="Antonoiu B."/>
            <person name="Zidanic M."/>
            <person name="Strong C."/>
            <person name="Sun H."/>
            <person name="Lamar B."/>
            <person name="Yordan C."/>
            <person name="Ma P."/>
            <person name="Zhong J."/>
            <person name="Preston R."/>
            <person name="Vil D."/>
            <person name="Shekher M."/>
            <person name="Matero A."/>
            <person name="Shah R."/>
            <person name="Swaby I.K."/>
            <person name="O'Shaughnessy A."/>
            <person name="Rodriguez M."/>
            <person name="Hoffman J."/>
            <person name="Till S."/>
            <person name="Granat S."/>
            <person name="Shohdy N."/>
            <person name="Hasegawa A."/>
            <person name="Hameed A."/>
            <person name="Lodhi M."/>
            <person name="Johnson A."/>
            <person name="Chen E."/>
            <person name="Marra M.A."/>
            <person name="Martienssen R."/>
            <person name="McCombie W.R."/>
        </authorList>
    </citation>
    <scope>NUCLEOTIDE SEQUENCE [LARGE SCALE GENOMIC DNA]</scope>
    <source>
        <strain>cv. Columbia</strain>
    </source>
</reference>
<reference key="3">
    <citation type="journal article" date="2017" name="Plant J.">
        <title>Araport11: a complete reannotation of the Arabidopsis thaliana reference genome.</title>
        <authorList>
            <person name="Cheng C.Y."/>
            <person name="Krishnakumar V."/>
            <person name="Chan A.P."/>
            <person name="Thibaud-Nissen F."/>
            <person name="Schobel S."/>
            <person name="Town C.D."/>
        </authorList>
    </citation>
    <scope>GENOME REANNOTATION</scope>
    <source>
        <strain>cv. Columbia</strain>
    </source>
</reference>
<reference evidence="3" key="4">
    <citation type="journal article" date="2001" name="Plant Mol. Biol.">
        <title>Two large Arabidopsis thaliana gene families are homologous to the Brassica gene superfamily that encodes pollen coat proteins and the male component of the self-incompatibility response.</title>
        <authorList>
            <person name="Vanoosthuyse V."/>
            <person name="Miege C."/>
            <person name="Dumas C."/>
            <person name="Cock J.M."/>
        </authorList>
    </citation>
    <scope>IDENTIFICATION</scope>
</reference>
<reference key="5">
    <citation type="journal article" date="2005" name="Plant Physiol.">
        <title>Genome organization of more than 300 defensin-like genes in Arabidopsis.</title>
        <authorList>
            <person name="Silverstein K.A.T."/>
            <person name="Graham M.A."/>
            <person name="Paape T.D."/>
            <person name="VandenBosch K.A."/>
        </authorList>
    </citation>
    <scope>GENE FAMILY</scope>
</reference>
<evidence type="ECO:0000250" key="1"/>
<evidence type="ECO:0000255" key="2"/>
<evidence type="ECO:0000305" key="3"/>
<feature type="signal peptide" evidence="2">
    <location>
        <begin position="1"/>
        <end position="22"/>
    </location>
</feature>
<feature type="chain" id="PRO_0000031937" description="Putative defensin-like protein 244">
    <location>
        <begin position="23"/>
        <end position="86"/>
    </location>
</feature>
<feature type="disulfide bond" evidence="1">
    <location>
        <begin position="28"/>
        <end position="83"/>
    </location>
</feature>
<feature type="disulfide bond" evidence="1">
    <location>
        <begin position="38"/>
        <end position="67"/>
    </location>
</feature>
<feature type="disulfide bond" evidence="1">
    <location>
        <begin position="48"/>
        <end position="77"/>
    </location>
</feature>
<feature type="disulfide bond" evidence="1">
    <location>
        <begin position="65"/>
        <end position="79"/>
    </location>
</feature>
<keyword id="KW-0929">Antimicrobial</keyword>
<keyword id="KW-1015">Disulfide bond</keyword>
<keyword id="KW-0295">Fungicide</keyword>
<keyword id="KW-0611">Plant defense</keyword>
<keyword id="KW-1185">Reference proteome</keyword>
<keyword id="KW-0964">Secreted</keyword>
<keyword id="KW-0732">Signal</keyword>
<comment type="subcellular location">
    <subcellularLocation>
        <location evidence="1">Secreted</location>
    </subcellularLocation>
</comment>
<comment type="similarity">
    <text evidence="3">Belongs to the DEFL family.</text>
</comment>
<organism evidence="3">
    <name type="scientific">Arabidopsis thaliana</name>
    <name type="common">Mouse-ear cress</name>
    <dbReference type="NCBI Taxonomy" id="3702"/>
    <lineage>
        <taxon>Eukaryota</taxon>
        <taxon>Viridiplantae</taxon>
        <taxon>Streptophyta</taxon>
        <taxon>Embryophyta</taxon>
        <taxon>Tracheophyta</taxon>
        <taxon>Spermatophyta</taxon>
        <taxon>Magnoliopsida</taxon>
        <taxon>eudicotyledons</taxon>
        <taxon>Gunneridae</taxon>
        <taxon>Pentapetalae</taxon>
        <taxon>rosids</taxon>
        <taxon>malvids</taxon>
        <taxon>Brassicales</taxon>
        <taxon>Brassicaceae</taxon>
        <taxon>Camelineae</taxon>
        <taxon>Arabidopsis</taxon>
    </lineage>
</organism>
<dbReference type="EMBL" id="Z97339">
    <property type="status" value="NOT_ANNOTATED_CDS"/>
    <property type="molecule type" value="Genomic_DNA"/>
</dbReference>
<dbReference type="EMBL" id="AL161542">
    <property type="status" value="NOT_ANNOTATED_CDS"/>
    <property type="molecule type" value="Genomic_DNA"/>
</dbReference>
<dbReference type="EMBL" id="CP002687">
    <property type="protein sequence ID" value="AEE83642.1"/>
    <property type="molecule type" value="Genomic_DNA"/>
</dbReference>
<dbReference type="RefSeq" id="NP_001031648.1">
    <property type="nucleotide sequence ID" value="NM_001036571.1"/>
</dbReference>
<dbReference type="SMR" id="P82630"/>
<dbReference type="STRING" id="3702.P82630"/>
<dbReference type="PaxDb" id="3702-AT4G15733.1"/>
<dbReference type="ProteomicsDB" id="224154"/>
<dbReference type="EnsemblPlants" id="AT4G15733.1">
    <property type="protein sequence ID" value="AT4G15733.1"/>
    <property type="gene ID" value="AT4G15733"/>
</dbReference>
<dbReference type="GeneID" id="3770387"/>
<dbReference type="Gramene" id="AT4G15733.1">
    <property type="protein sequence ID" value="AT4G15733.1"/>
    <property type="gene ID" value="AT4G15733"/>
</dbReference>
<dbReference type="KEGG" id="ath:AT4G15733"/>
<dbReference type="Araport" id="AT4G15733"/>
<dbReference type="TAIR" id="AT4G15733">
    <property type="gene designation" value="SCRL11"/>
</dbReference>
<dbReference type="eggNOG" id="ENOG502T27D">
    <property type="taxonomic scope" value="Eukaryota"/>
</dbReference>
<dbReference type="HOGENOM" id="CLU_174283_0_0_1"/>
<dbReference type="InParanoid" id="P82630"/>
<dbReference type="OMA" id="VCANIDC"/>
<dbReference type="PhylomeDB" id="P82630"/>
<dbReference type="PRO" id="PR:P82630"/>
<dbReference type="Proteomes" id="UP000006548">
    <property type="component" value="Chromosome 4"/>
</dbReference>
<dbReference type="ExpressionAtlas" id="P82630">
    <property type="expression patterns" value="baseline and differential"/>
</dbReference>
<dbReference type="GO" id="GO:0005576">
    <property type="term" value="C:extracellular region"/>
    <property type="evidence" value="ECO:0007669"/>
    <property type="project" value="UniProtKB-SubCell"/>
</dbReference>
<dbReference type="GO" id="GO:0050832">
    <property type="term" value="P:defense response to fungus"/>
    <property type="evidence" value="ECO:0007669"/>
    <property type="project" value="UniProtKB-KW"/>
</dbReference>
<dbReference type="GO" id="GO:0031640">
    <property type="term" value="P:killing of cells of another organism"/>
    <property type="evidence" value="ECO:0007669"/>
    <property type="project" value="UniProtKB-KW"/>
</dbReference>
<dbReference type="GO" id="GO:0007165">
    <property type="term" value="P:signal transduction"/>
    <property type="evidence" value="ECO:0007669"/>
    <property type="project" value="InterPro"/>
</dbReference>
<dbReference type="InterPro" id="IPR010682">
    <property type="entry name" value="SCRL"/>
</dbReference>
<dbReference type="PANTHER" id="PTHR34450:SF9">
    <property type="entry name" value="DEFENSIN-LIKE PROTEIN 242-RELATED"/>
    <property type="match status" value="1"/>
</dbReference>
<dbReference type="PANTHER" id="PTHR34450">
    <property type="entry name" value="DEFENSIN-LIKE PROTEIN 245-RELATED"/>
    <property type="match status" value="1"/>
</dbReference>
<dbReference type="Pfam" id="PF06876">
    <property type="entry name" value="SCRL"/>
    <property type="match status" value="1"/>
</dbReference>
<gene>
    <name type="primary">SCRL11</name>
    <name type="ordered locus">At4g15733</name>
    <name type="ORF">FCAALL</name>
</gene>
<name>DF244_ARATH</name>
<accession>P82630</accession>
<sequence length="86" mass="9391">MKGIAMLLVSCLLFSFLSTNLAKELKWCPSKDVFNGSCTDTGSPSYTCFLDLLGSKSASAMPKNCKCTPLPHNRRQCDCFVVCDSN</sequence>
<protein>
    <recommendedName>
        <fullName>Putative defensin-like protein 244</fullName>
    </recommendedName>
    <alternativeName>
        <fullName>Putative S locus cysteine-rich-like protein 11</fullName>
        <shortName>Protein SCRL11</shortName>
        <shortName>SCR-like protein 11</shortName>
    </alternativeName>
</protein>